<proteinExistence type="inferred from homology"/>
<sequence length="38" mass="4451">MKVRPSVKPICEYCKVIRRNGRVMVICPTNPKHKQRQG</sequence>
<evidence type="ECO:0000255" key="1">
    <source>
        <dbReference type="HAMAP-Rule" id="MF_00251"/>
    </source>
</evidence>
<evidence type="ECO:0000305" key="2"/>
<name>RL36_STRA5</name>
<feature type="chain" id="PRO_0000126275" description="Large ribosomal subunit protein bL36">
    <location>
        <begin position="1"/>
        <end position="38"/>
    </location>
</feature>
<reference key="1">
    <citation type="journal article" date="2002" name="Proc. Natl. Acad. Sci. U.S.A.">
        <title>Complete genome sequence and comparative genomic analysis of an emerging human pathogen, serotype V Streptococcus agalactiae.</title>
        <authorList>
            <person name="Tettelin H."/>
            <person name="Masignani V."/>
            <person name="Cieslewicz M.J."/>
            <person name="Eisen J.A."/>
            <person name="Peterson S.N."/>
            <person name="Wessels M.R."/>
            <person name="Paulsen I.T."/>
            <person name="Nelson K.E."/>
            <person name="Margarit I."/>
            <person name="Read T.D."/>
            <person name="Madoff L.C."/>
            <person name="Wolf A.M."/>
            <person name="Beanan M.J."/>
            <person name="Brinkac L.M."/>
            <person name="Daugherty S.C."/>
            <person name="DeBoy R.T."/>
            <person name="Durkin A.S."/>
            <person name="Kolonay J.F."/>
            <person name="Madupu R."/>
            <person name="Lewis M.R."/>
            <person name="Radune D."/>
            <person name="Fedorova N.B."/>
            <person name="Scanlan D."/>
            <person name="Khouri H.M."/>
            <person name="Mulligan S."/>
            <person name="Carty H.A."/>
            <person name="Cline R.T."/>
            <person name="Van Aken S.E."/>
            <person name="Gill J."/>
            <person name="Scarselli M."/>
            <person name="Mora M."/>
            <person name="Iacobini E.T."/>
            <person name="Brettoni C."/>
            <person name="Galli G."/>
            <person name="Mariani M."/>
            <person name="Vegni F."/>
            <person name="Maione D."/>
            <person name="Rinaudo D."/>
            <person name="Rappuoli R."/>
            <person name="Telford J.L."/>
            <person name="Kasper D.L."/>
            <person name="Grandi G."/>
            <person name="Fraser C.M."/>
        </authorList>
    </citation>
    <scope>NUCLEOTIDE SEQUENCE [LARGE SCALE GENOMIC DNA]</scope>
    <source>
        <strain>ATCC BAA-611 / 2603 V/R</strain>
    </source>
</reference>
<comment type="similarity">
    <text evidence="1">Belongs to the bacterial ribosomal protein bL36 family.</text>
</comment>
<organism>
    <name type="scientific">Streptococcus agalactiae serotype V (strain ATCC BAA-611 / 2603 V/R)</name>
    <dbReference type="NCBI Taxonomy" id="208435"/>
    <lineage>
        <taxon>Bacteria</taxon>
        <taxon>Bacillati</taxon>
        <taxon>Bacillota</taxon>
        <taxon>Bacilli</taxon>
        <taxon>Lactobacillales</taxon>
        <taxon>Streptococcaceae</taxon>
        <taxon>Streptococcus</taxon>
    </lineage>
</organism>
<accession>P66307</accession>
<accession>Q9A1V2</accession>
<keyword id="KW-1185">Reference proteome</keyword>
<keyword id="KW-0687">Ribonucleoprotein</keyword>
<keyword id="KW-0689">Ribosomal protein</keyword>
<dbReference type="EMBL" id="AE009948">
    <property type="protein sequence ID" value="AAM98989.1"/>
    <property type="molecule type" value="Genomic_DNA"/>
</dbReference>
<dbReference type="RefSeq" id="NP_687117.1">
    <property type="nucleotide sequence ID" value="NC_004116.1"/>
</dbReference>
<dbReference type="RefSeq" id="WP_000868345.1">
    <property type="nucleotide sequence ID" value="NC_004116.1"/>
</dbReference>
<dbReference type="SMR" id="P66307"/>
<dbReference type="STRING" id="208435.SAG0081"/>
<dbReference type="GeneID" id="93860206"/>
<dbReference type="KEGG" id="sag:SAG0081"/>
<dbReference type="PATRIC" id="fig|208435.3.peg.80"/>
<dbReference type="HOGENOM" id="CLU_135723_6_2_9"/>
<dbReference type="OrthoDB" id="9802520at2"/>
<dbReference type="Proteomes" id="UP000000821">
    <property type="component" value="Chromosome"/>
</dbReference>
<dbReference type="GO" id="GO:0005737">
    <property type="term" value="C:cytoplasm"/>
    <property type="evidence" value="ECO:0007669"/>
    <property type="project" value="UniProtKB-ARBA"/>
</dbReference>
<dbReference type="GO" id="GO:1990904">
    <property type="term" value="C:ribonucleoprotein complex"/>
    <property type="evidence" value="ECO:0007669"/>
    <property type="project" value="UniProtKB-KW"/>
</dbReference>
<dbReference type="GO" id="GO:0005840">
    <property type="term" value="C:ribosome"/>
    <property type="evidence" value="ECO:0007669"/>
    <property type="project" value="UniProtKB-KW"/>
</dbReference>
<dbReference type="GO" id="GO:0003735">
    <property type="term" value="F:structural constituent of ribosome"/>
    <property type="evidence" value="ECO:0007669"/>
    <property type="project" value="InterPro"/>
</dbReference>
<dbReference type="GO" id="GO:0006412">
    <property type="term" value="P:translation"/>
    <property type="evidence" value="ECO:0007669"/>
    <property type="project" value="UniProtKB-UniRule"/>
</dbReference>
<dbReference type="HAMAP" id="MF_00251">
    <property type="entry name" value="Ribosomal_bL36"/>
    <property type="match status" value="1"/>
</dbReference>
<dbReference type="InterPro" id="IPR000473">
    <property type="entry name" value="Ribosomal_bL36"/>
</dbReference>
<dbReference type="InterPro" id="IPR035977">
    <property type="entry name" value="Ribosomal_bL36_sp"/>
</dbReference>
<dbReference type="NCBIfam" id="TIGR01022">
    <property type="entry name" value="rpmJ_bact"/>
    <property type="match status" value="1"/>
</dbReference>
<dbReference type="PANTHER" id="PTHR42888">
    <property type="entry name" value="50S RIBOSOMAL PROTEIN L36, CHLOROPLASTIC"/>
    <property type="match status" value="1"/>
</dbReference>
<dbReference type="PANTHER" id="PTHR42888:SF1">
    <property type="entry name" value="LARGE RIBOSOMAL SUBUNIT PROTEIN BL36C"/>
    <property type="match status" value="1"/>
</dbReference>
<dbReference type="Pfam" id="PF00444">
    <property type="entry name" value="Ribosomal_L36"/>
    <property type="match status" value="1"/>
</dbReference>
<dbReference type="SUPFAM" id="SSF57840">
    <property type="entry name" value="Ribosomal protein L36"/>
    <property type="match status" value="1"/>
</dbReference>
<dbReference type="PROSITE" id="PS00828">
    <property type="entry name" value="RIBOSOMAL_L36"/>
    <property type="match status" value="1"/>
</dbReference>
<gene>
    <name evidence="1" type="primary">rpmJ</name>
    <name type="ordered locus">SAG0081</name>
</gene>
<protein>
    <recommendedName>
        <fullName evidence="1">Large ribosomal subunit protein bL36</fullName>
    </recommendedName>
    <alternativeName>
        <fullName evidence="2">50S ribosomal protein L36</fullName>
    </alternativeName>
</protein>